<name>YUSU_BACSU</name>
<sequence length="95" mass="11282">MRKLLAVFSKGRWKMEQKLQEQLDGLLEKYTELLLGETNDELKEEVKQWILYTHIAKSMPPLAKHWNATYPDAKQGIKEIIQHIKELNEAHRNKQ</sequence>
<proteinExistence type="predicted"/>
<feature type="chain" id="PRO_0000049925" description="Uncharacterized protein YusU">
    <location>
        <begin position="1"/>
        <end position="95"/>
    </location>
</feature>
<feature type="coiled-coil region" evidence="1">
    <location>
        <begin position="14"/>
        <end position="50"/>
    </location>
</feature>
<keyword id="KW-0175">Coiled coil</keyword>
<keyword id="KW-1185">Reference proteome</keyword>
<protein>
    <recommendedName>
        <fullName>Uncharacterized protein YusU</fullName>
    </recommendedName>
</protein>
<organism>
    <name type="scientific">Bacillus subtilis (strain 168)</name>
    <dbReference type="NCBI Taxonomy" id="224308"/>
    <lineage>
        <taxon>Bacteria</taxon>
        <taxon>Bacillati</taxon>
        <taxon>Bacillota</taxon>
        <taxon>Bacilli</taxon>
        <taxon>Bacillales</taxon>
        <taxon>Bacillaceae</taxon>
        <taxon>Bacillus</taxon>
    </lineage>
</organism>
<dbReference type="EMBL" id="AL009126">
    <property type="protein sequence ID" value="CAB15282.1"/>
    <property type="molecule type" value="Genomic_DNA"/>
</dbReference>
<dbReference type="PIR" id="F70022">
    <property type="entry name" value="F70022"/>
</dbReference>
<dbReference type="RefSeq" id="NP_391172.1">
    <property type="nucleotide sequence ID" value="NC_000964.3"/>
</dbReference>
<dbReference type="RefSeq" id="WP_003228549.1">
    <property type="nucleotide sequence ID" value="NZ_OZ025638.1"/>
</dbReference>
<dbReference type="SMR" id="O32187"/>
<dbReference type="FunCoup" id="O32187">
    <property type="interactions" value="26"/>
</dbReference>
<dbReference type="STRING" id="224308.BSU32930"/>
<dbReference type="PaxDb" id="224308-BSU32930"/>
<dbReference type="EnsemblBacteria" id="CAB15282">
    <property type="protein sequence ID" value="CAB15282"/>
    <property type="gene ID" value="BSU_32930"/>
</dbReference>
<dbReference type="GeneID" id="935925"/>
<dbReference type="KEGG" id="bsu:BSU32930"/>
<dbReference type="PATRIC" id="fig|224308.43.peg.3448"/>
<dbReference type="eggNOG" id="ENOG503339Q">
    <property type="taxonomic scope" value="Bacteria"/>
</dbReference>
<dbReference type="InParanoid" id="O32187"/>
<dbReference type="OrthoDB" id="2619783at2"/>
<dbReference type="BioCyc" id="BSUB:BSU32930-MONOMER"/>
<dbReference type="Proteomes" id="UP000001570">
    <property type="component" value="Chromosome"/>
</dbReference>
<dbReference type="InterPro" id="IPR020393">
    <property type="entry name" value="Uncharacterised_YusU"/>
</dbReference>
<dbReference type="Pfam" id="PF10835">
    <property type="entry name" value="DUF2573"/>
    <property type="match status" value="1"/>
</dbReference>
<evidence type="ECO:0000255" key="1"/>
<reference key="1">
    <citation type="journal article" date="1997" name="Nature">
        <title>The complete genome sequence of the Gram-positive bacterium Bacillus subtilis.</title>
        <authorList>
            <person name="Kunst F."/>
            <person name="Ogasawara N."/>
            <person name="Moszer I."/>
            <person name="Albertini A.M."/>
            <person name="Alloni G."/>
            <person name="Azevedo V."/>
            <person name="Bertero M.G."/>
            <person name="Bessieres P."/>
            <person name="Bolotin A."/>
            <person name="Borchert S."/>
            <person name="Borriss R."/>
            <person name="Boursier L."/>
            <person name="Brans A."/>
            <person name="Braun M."/>
            <person name="Brignell S.C."/>
            <person name="Bron S."/>
            <person name="Brouillet S."/>
            <person name="Bruschi C.V."/>
            <person name="Caldwell B."/>
            <person name="Capuano V."/>
            <person name="Carter N.M."/>
            <person name="Choi S.-K."/>
            <person name="Codani J.-J."/>
            <person name="Connerton I.F."/>
            <person name="Cummings N.J."/>
            <person name="Daniel R.A."/>
            <person name="Denizot F."/>
            <person name="Devine K.M."/>
            <person name="Duesterhoeft A."/>
            <person name="Ehrlich S.D."/>
            <person name="Emmerson P.T."/>
            <person name="Entian K.-D."/>
            <person name="Errington J."/>
            <person name="Fabret C."/>
            <person name="Ferrari E."/>
            <person name="Foulger D."/>
            <person name="Fritz C."/>
            <person name="Fujita M."/>
            <person name="Fujita Y."/>
            <person name="Fuma S."/>
            <person name="Galizzi A."/>
            <person name="Galleron N."/>
            <person name="Ghim S.-Y."/>
            <person name="Glaser P."/>
            <person name="Goffeau A."/>
            <person name="Golightly E.J."/>
            <person name="Grandi G."/>
            <person name="Guiseppi G."/>
            <person name="Guy B.J."/>
            <person name="Haga K."/>
            <person name="Haiech J."/>
            <person name="Harwood C.R."/>
            <person name="Henaut A."/>
            <person name="Hilbert H."/>
            <person name="Holsappel S."/>
            <person name="Hosono S."/>
            <person name="Hullo M.-F."/>
            <person name="Itaya M."/>
            <person name="Jones L.-M."/>
            <person name="Joris B."/>
            <person name="Karamata D."/>
            <person name="Kasahara Y."/>
            <person name="Klaerr-Blanchard M."/>
            <person name="Klein C."/>
            <person name="Kobayashi Y."/>
            <person name="Koetter P."/>
            <person name="Koningstein G."/>
            <person name="Krogh S."/>
            <person name="Kumano M."/>
            <person name="Kurita K."/>
            <person name="Lapidus A."/>
            <person name="Lardinois S."/>
            <person name="Lauber J."/>
            <person name="Lazarevic V."/>
            <person name="Lee S.-M."/>
            <person name="Levine A."/>
            <person name="Liu H."/>
            <person name="Masuda S."/>
            <person name="Mauel C."/>
            <person name="Medigue C."/>
            <person name="Medina N."/>
            <person name="Mellado R.P."/>
            <person name="Mizuno M."/>
            <person name="Moestl D."/>
            <person name="Nakai S."/>
            <person name="Noback M."/>
            <person name="Noone D."/>
            <person name="O'Reilly M."/>
            <person name="Ogawa K."/>
            <person name="Ogiwara A."/>
            <person name="Oudega B."/>
            <person name="Park S.-H."/>
            <person name="Parro V."/>
            <person name="Pohl T.M."/>
            <person name="Portetelle D."/>
            <person name="Porwollik S."/>
            <person name="Prescott A.M."/>
            <person name="Presecan E."/>
            <person name="Pujic P."/>
            <person name="Purnelle B."/>
            <person name="Rapoport G."/>
            <person name="Rey M."/>
            <person name="Reynolds S."/>
            <person name="Rieger M."/>
            <person name="Rivolta C."/>
            <person name="Rocha E."/>
            <person name="Roche B."/>
            <person name="Rose M."/>
            <person name="Sadaie Y."/>
            <person name="Sato T."/>
            <person name="Scanlan E."/>
            <person name="Schleich S."/>
            <person name="Schroeter R."/>
            <person name="Scoffone F."/>
            <person name="Sekiguchi J."/>
            <person name="Sekowska A."/>
            <person name="Seror S.J."/>
            <person name="Serror P."/>
            <person name="Shin B.-S."/>
            <person name="Soldo B."/>
            <person name="Sorokin A."/>
            <person name="Tacconi E."/>
            <person name="Takagi T."/>
            <person name="Takahashi H."/>
            <person name="Takemaru K."/>
            <person name="Takeuchi M."/>
            <person name="Tamakoshi A."/>
            <person name="Tanaka T."/>
            <person name="Terpstra P."/>
            <person name="Tognoni A."/>
            <person name="Tosato V."/>
            <person name="Uchiyama S."/>
            <person name="Vandenbol M."/>
            <person name="Vannier F."/>
            <person name="Vassarotti A."/>
            <person name="Viari A."/>
            <person name="Wambutt R."/>
            <person name="Wedler E."/>
            <person name="Wedler H."/>
            <person name="Weitzenegger T."/>
            <person name="Winters P."/>
            <person name="Wipat A."/>
            <person name="Yamamoto H."/>
            <person name="Yamane K."/>
            <person name="Yasumoto K."/>
            <person name="Yata K."/>
            <person name="Yoshida K."/>
            <person name="Yoshikawa H.-F."/>
            <person name="Zumstein E."/>
            <person name="Yoshikawa H."/>
            <person name="Danchin A."/>
        </authorList>
    </citation>
    <scope>NUCLEOTIDE SEQUENCE [LARGE SCALE GENOMIC DNA]</scope>
    <source>
        <strain>168</strain>
    </source>
</reference>
<gene>
    <name type="primary">yusU</name>
    <name type="ordered locus">BSU32930</name>
</gene>
<accession>O32187</accession>